<gene>
    <name evidence="1" type="primary">ldh</name>
    <name type="ordered locus">SPJ_1135</name>
</gene>
<name>LDH_STRZJ</name>
<organism>
    <name type="scientific">Streptococcus pneumoniae (strain JJA)</name>
    <dbReference type="NCBI Taxonomy" id="488222"/>
    <lineage>
        <taxon>Bacteria</taxon>
        <taxon>Bacillati</taxon>
        <taxon>Bacillota</taxon>
        <taxon>Bacilli</taxon>
        <taxon>Lactobacillales</taxon>
        <taxon>Streptococcaceae</taxon>
        <taxon>Streptococcus</taxon>
    </lineage>
</organism>
<proteinExistence type="inferred from homology"/>
<sequence length="328" mass="35355">MTSTKQHKKVILVGDGAVGSSYAFALVNQGIAQELGIIEIPQLHEKAVGDALDLSHALAFTSPKKIYAAQYSDCADADLVVITAGAPQKPGETRLDLVGKNLAINKSIVTQVVESGFKGIFLVAANPVDVLTYSTWKFSGFPKERVIGSGTSLDSARFRQALAEKLDVDARSVHAYIMGEHGDSEFAVWSHANIAGVNLEEFLKDTQNVQEAELIELFEGVRDAAYTIINKKGATYYGIAVALARITKAILDDENAVLPLSVFQEGQYGVENVFIGQPAVVGAHGIVRPVNIPLNDAETQKMQASAKELQAIIDEAWKNPEFQEASKN</sequence>
<protein>
    <recommendedName>
        <fullName evidence="1">L-lactate dehydrogenase</fullName>
        <shortName evidence="1">L-LDH</shortName>
        <ecNumber evidence="1">1.1.1.27</ecNumber>
    </recommendedName>
</protein>
<comment type="function">
    <text evidence="1">Catalyzes the conversion of lactate to pyruvate.</text>
</comment>
<comment type="catalytic activity">
    <reaction evidence="1">
        <text>(S)-lactate + NAD(+) = pyruvate + NADH + H(+)</text>
        <dbReference type="Rhea" id="RHEA:23444"/>
        <dbReference type="ChEBI" id="CHEBI:15361"/>
        <dbReference type="ChEBI" id="CHEBI:15378"/>
        <dbReference type="ChEBI" id="CHEBI:16651"/>
        <dbReference type="ChEBI" id="CHEBI:57540"/>
        <dbReference type="ChEBI" id="CHEBI:57945"/>
        <dbReference type="EC" id="1.1.1.27"/>
    </reaction>
</comment>
<comment type="activity regulation">
    <text evidence="1">Allosterically activated by fructose 1,6-bisphosphate (FBP).</text>
</comment>
<comment type="pathway">
    <text evidence="1">Fermentation; pyruvate fermentation to lactate; (S)-lactate from pyruvate: step 1/1.</text>
</comment>
<comment type="subunit">
    <text evidence="1">Homotetramer.</text>
</comment>
<comment type="subcellular location">
    <subcellularLocation>
        <location evidence="1">Cytoplasm</location>
    </subcellularLocation>
</comment>
<comment type="similarity">
    <text evidence="1">Belongs to the LDH/MDH superfamily. LDH family.</text>
</comment>
<feature type="chain" id="PRO_1000190781" description="L-lactate dehydrogenase">
    <location>
        <begin position="1"/>
        <end position="328"/>
    </location>
</feature>
<feature type="active site" description="Proton acceptor" evidence="1">
    <location>
        <position position="181"/>
    </location>
</feature>
<feature type="binding site" evidence="1">
    <location>
        <position position="18"/>
    </location>
    <ligand>
        <name>NAD(+)</name>
        <dbReference type="ChEBI" id="CHEBI:57540"/>
    </ligand>
</feature>
<feature type="binding site" evidence="1">
    <location>
        <position position="39"/>
    </location>
    <ligand>
        <name>NAD(+)</name>
        <dbReference type="ChEBI" id="CHEBI:57540"/>
    </ligand>
</feature>
<feature type="binding site" evidence="1">
    <location>
        <position position="46"/>
    </location>
    <ligand>
        <name>NAD(+)</name>
        <dbReference type="ChEBI" id="CHEBI:57540"/>
    </ligand>
</feature>
<feature type="binding site" evidence="1">
    <location>
        <position position="71"/>
    </location>
    <ligand>
        <name>NAD(+)</name>
        <dbReference type="ChEBI" id="CHEBI:57540"/>
    </ligand>
</feature>
<feature type="binding site" evidence="1">
    <location>
        <begin position="85"/>
        <end position="86"/>
    </location>
    <ligand>
        <name>NAD(+)</name>
        <dbReference type="ChEBI" id="CHEBI:57540"/>
    </ligand>
</feature>
<feature type="binding site" evidence="1">
    <location>
        <position position="88"/>
    </location>
    <ligand>
        <name>substrate</name>
    </ligand>
</feature>
<feature type="binding site" evidence="1">
    <location>
        <position position="94"/>
    </location>
    <ligand>
        <name>substrate</name>
    </ligand>
</feature>
<feature type="binding site" evidence="1">
    <location>
        <position position="107"/>
    </location>
    <ligand>
        <name>NAD(+)</name>
        <dbReference type="ChEBI" id="CHEBI:57540"/>
    </ligand>
</feature>
<feature type="binding site" evidence="1">
    <location>
        <begin position="124"/>
        <end position="126"/>
    </location>
    <ligand>
        <name>NAD(+)</name>
        <dbReference type="ChEBI" id="CHEBI:57540"/>
    </ligand>
</feature>
<feature type="binding site" evidence="1">
    <location>
        <begin position="126"/>
        <end position="129"/>
    </location>
    <ligand>
        <name>substrate</name>
    </ligand>
</feature>
<feature type="binding site" evidence="1">
    <location>
        <position position="149"/>
    </location>
    <ligand>
        <name>NAD(+)</name>
        <dbReference type="ChEBI" id="CHEBI:57540"/>
    </ligand>
</feature>
<feature type="binding site" evidence="1">
    <location>
        <begin position="154"/>
        <end position="157"/>
    </location>
    <ligand>
        <name>substrate</name>
    </ligand>
</feature>
<feature type="binding site" evidence="1">
    <location>
        <position position="159"/>
    </location>
    <ligand>
        <name>beta-D-fructose 1,6-bisphosphate</name>
        <dbReference type="ChEBI" id="CHEBI:32966"/>
        <note>allosteric activator</note>
    </ligand>
</feature>
<feature type="binding site" evidence="1">
    <location>
        <position position="174"/>
    </location>
    <ligand>
        <name>beta-D-fructose 1,6-bisphosphate</name>
        <dbReference type="ChEBI" id="CHEBI:32966"/>
        <note>allosteric activator</note>
    </ligand>
</feature>
<feature type="binding site" evidence="1">
    <location>
        <position position="235"/>
    </location>
    <ligand>
        <name>substrate</name>
    </ligand>
</feature>
<feature type="modified residue" description="Phosphotyrosine" evidence="1">
    <location>
        <position position="226"/>
    </location>
</feature>
<dbReference type="EC" id="1.1.1.27" evidence="1"/>
<dbReference type="EMBL" id="CP000919">
    <property type="protein sequence ID" value="ACO18934.1"/>
    <property type="molecule type" value="Genomic_DNA"/>
</dbReference>
<dbReference type="RefSeq" id="WP_000204727.1">
    <property type="nucleotide sequence ID" value="NC_012466.1"/>
</dbReference>
<dbReference type="SMR" id="C1CEH8"/>
<dbReference type="KEGG" id="sjj:SPJ_1135"/>
<dbReference type="HOGENOM" id="CLU_045401_1_1_9"/>
<dbReference type="UniPathway" id="UPA00554">
    <property type="reaction ID" value="UER00611"/>
</dbReference>
<dbReference type="Proteomes" id="UP000002206">
    <property type="component" value="Chromosome"/>
</dbReference>
<dbReference type="GO" id="GO:0005737">
    <property type="term" value="C:cytoplasm"/>
    <property type="evidence" value="ECO:0007669"/>
    <property type="project" value="UniProtKB-SubCell"/>
</dbReference>
<dbReference type="GO" id="GO:0004459">
    <property type="term" value="F:L-lactate dehydrogenase activity"/>
    <property type="evidence" value="ECO:0007669"/>
    <property type="project" value="UniProtKB-UniRule"/>
</dbReference>
<dbReference type="GO" id="GO:0006096">
    <property type="term" value="P:glycolytic process"/>
    <property type="evidence" value="ECO:0007669"/>
    <property type="project" value="UniProtKB-UniRule"/>
</dbReference>
<dbReference type="GO" id="GO:0006089">
    <property type="term" value="P:lactate metabolic process"/>
    <property type="evidence" value="ECO:0007669"/>
    <property type="project" value="TreeGrafter"/>
</dbReference>
<dbReference type="CDD" id="cd05291">
    <property type="entry name" value="HicDH_like"/>
    <property type="match status" value="1"/>
</dbReference>
<dbReference type="FunFam" id="3.40.50.720:FF:000018">
    <property type="entry name" value="Malate dehydrogenase"/>
    <property type="match status" value="1"/>
</dbReference>
<dbReference type="Gene3D" id="3.90.110.10">
    <property type="entry name" value="Lactate dehydrogenase/glycoside hydrolase, family 4, C-terminal"/>
    <property type="match status" value="1"/>
</dbReference>
<dbReference type="Gene3D" id="3.40.50.720">
    <property type="entry name" value="NAD(P)-binding Rossmann-like Domain"/>
    <property type="match status" value="1"/>
</dbReference>
<dbReference type="HAMAP" id="MF_00488">
    <property type="entry name" value="Lactate_dehydrog"/>
    <property type="match status" value="1"/>
</dbReference>
<dbReference type="InterPro" id="IPR001557">
    <property type="entry name" value="L-lactate/malate_DH"/>
</dbReference>
<dbReference type="InterPro" id="IPR011304">
    <property type="entry name" value="L-lactate_DH"/>
</dbReference>
<dbReference type="InterPro" id="IPR018177">
    <property type="entry name" value="L-lactate_DH_AS"/>
</dbReference>
<dbReference type="InterPro" id="IPR022383">
    <property type="entry name" value="Lactate/malate_DH_C"/>
</dbReference>
<dbReference type="InterPro" id="IPR001236">
    <property type="entry name" value="Lactate/malate_DH_N"/>
</dbReference>
<dbReference type="InterPro" id="IPR015955">
    <property type="entry name" value="Lactate_DH/Glyco_Ohase_4_C"/>
</dbReference>
<dbReference type="InterPro" id="IPR036291">
    <property type="entry name" value="NAD(P)-bd_dom_sf"/>
</dbReference>
<dbReference type="NCBIfam" id="TIGR01771">
    <property type="entry name" value="L-LDH-NAD"/>
    <property type="match status" value="1"/>
</dbReference>
<dbReference type="NCBIfam" id="NF000824">
    <property type="entry name" value="PRK00066.1"/>
    <property type="match status" value="1"/>
</dbReference>
<dbReference type="PANTHER" id="PTHR43128">
    <property type="entry name" value="L-2-HYDROXYCARBOXYLATE DEHYDROGENASE (NAD(P)(+))"/>
    <property type="match status" value="1"/>
</dbReference>
<dbReference type="PANTHER" id="PTHR43128:SF16">
    <property type="entry name" value="L-LACTATE DEHYDROGENASE"/>
    <property type="match status" value="1"/>
</dbReference>
<dbReference type="Pfam" id="PF02866">
    <property type="entry name" value="Ldh_1_C"/>
    <property type="match status" value="1"/>
</dbReference>
<dbReference type="Pfam" id="PF00056">
    <property type="entry name" value="Ldh_1_N"/>
    <property type="match status" value="1"/>
</dbReference>
<dbReference type="PIRSF" id="PIRSF000102">
    <property type="entry name" value="Lac_mal_DH"/>
    <property type="match status" value="1"/>
</dbReference>
<dbReference type="PRINTS" id="PR00086">
    <property type="entry name" value="LLDHDRGNASE"/>
</dbReference>
<dbReference type="SUPFAM" id="SSF56327">
    <property type="entry name" value="LDH C-terminal domain-like"/>
    <property type="match status" value="1"/>
</dbReference>
<dbReference type="SUPFAM" id="SSF51735">
    <property type="entry name" value="NAD(P)-binding Rossmann-fold domains"/>
    <property type="match status" value="1"/>
</dbReference>
<dbReference type="PROSITE" id="PS00064">
    <property type="entry name" value="L_LDH"/>
    <property type="match status" value="1"/>
</dbReference>
<keyword id="KW-0021">Allosteric enzyme</keyword>
<keyword id="KW-0963">Cytoplasm</keyword>
<keyword id="KW-0520">NAD</keyword>
<keyword id="KW-0560">Oxidoreductase</keyword>
<keyword id="KW-0597">Phosphoprotein</keyword>
<evidence type="ECO:0000255" key="1">
    <source>
        <dbReference type="HAMAP-Rule" id="MF_00488"/>
    </source>
</evidence>
<accession>C1CEH8</accession>
<reference key="1">
    <citation type="journal article" date="2010" name="Genome Biol.">
        <title>Structure and dynamics of the pan-genome of Streptococcus pneumoniae and closely related species.</title>
        <authorList>
            <person name="Donati C."/>
            <person name="Hiller N.L."/>
            <person name="Tettelin H."/>
            <person name="Muzzi A."/>
            <person name="Croucher N.J."/>
            <person name="Angiuoli S.V."/>
            <person name="Oggioni M."/>
            <person name="Dunning Hotopp J.C."/>
            <person name="Hu F.Z."/>
            <person name="Riley D.R."/>
            <person name="Covacci A."/>
            <person name="Mitchell T.J."/>
            <person name="Bentley S.D."/>
            <person name="Kilian M."/>
            <person name="Ehrlich G.D."/>
            <person name="Rappuoli R."/>
            <person name="Moxon E.R."/>
            <person name="Masignani V."/>
        </authorList>
    </citation>
    <scope>NUCLEOTIDE SEQUENCE [LARGE SCALE GENOMIC DNA]</scope>
    <source>
        <strain>JJA</strain>
    </source>
</reference>